<feature type="chain" id="PRO_1000063203" description="1-(5-phosphoribosyl)-5-[(5-phosphoribosylamino)methylideneamino] imidazole-4-carboxamide isomerase">
    <location>
        <begin position="1"/>
        <end position="242"/>
    </location>
</feature>
<feature type="active site" description="Proton acceptor" evidence="1">
    <location>
        <position position="8"/>
    </location>
</feature>
<feature type="active site" description="Proton donor" evidence="1">
    <location>
        <position position="129"/>
    </location>
</feature>
<organism>
    <name type="scientific">Clostridium botulinum (strain Langeland / NCTC 10281 / Type F)</name>
    <dbReference type="NCBI Taxonomy" id="441772"/>
    <lineage>
        <taxon>Bacteria</taxon>
        <taxon>Bacillati</taxon>
        <taxon>Bacillota</taxon>
        <taxon>Clostridia</taxon>
        <taxon>Eubacteriales</taxon>
        <taxon>Clostridiaceae</taxon>
        <taxon>Clostridium</taxon>
    </lineage>
</organism>
<keyword id="KW-0028">Amino-acid biosynthesis</keyword>
<keyword id="KW-0963">Cytoplasm</keyword>
<keyword id="KW-0368">Histidine biosynthesis</keyword>
<keyword id="KW-0413">Isomerase</keyword>
<gene>
    <name evidence="1" type="primary">hisA</name>
    <name type="ordered locus">CLI_1652</name>
</gene>
<sequence>MIILPAIDLKEGKCIRLYQGDFKASKVVAEDPIEVALKFKENGAEYIHIVDLDGALTGEIKNLSIISYIIKTINIPVELGGGIRNLNTIDMLIDAGIERVILGTAALNNRGLVEKAVKKYDEKIAIGIDAKNEKVAINGWLNVSSINYIDFAKEMEKIGVRNIIFTDISKDGTLKGPNLDQLKKLNESISCNVIASGGIKDIEDLKVIKEMDVYGAIVGKAIYSGNINLNEAIKIINKESSK</sequence>
<proteinExistence type="inferred from homology"/>
<protein>
    <recommendedName>
        <fullName evidence="1">1-(5-phosphoribosyl)-5-[(5-phosphoribosylamino)methylideneamino] imidazole-4-carboxamide isomerase</fullName>
        <ecNumber evidence="1">5.3.1.16</ecNumber>
    </recommendedName>
    <alternativeName>
        <fullName evidence="1">Phosphoribosylformimino-5-aminoimidazole carboxamide ribotide isomerase</fullName>
    </alternativeName>
</protein>
<reference key="1">
    <citation type="submission" date="2007-06" db="EMBL/GenBank/DDBJ databases">
        <authorList>
            <person name="Brinkac L.M."/>
            <person name="Daugherty S."/>
            <person name="Dodson R.J."/>
            <person name="Madupu R."/>
            <person name="Brown J.L."/>
            <person name="Bruce D."/>
            <person name="Detter C."/>
            <person name="Munk C."/>
            <person name="Smith L.A."/>
            <person name="Smith T.J."/>
            <person name="White O."/>
            <person name="Brettin T.S."/>
        </authorList>
    </citation>
    <scope>NUCLEOTIDE SEQUENCE [LARGE SCALE GENOMIC DNA]</scope>
    <source>
        <strain>Langeland / NCTC 10281 / Type F</strain>
    </source>
</reference>
<dbReference type="EC" id="5.3.1.16" evidence="1"/>
<dbReference type="EMBL" id="CP000728">
    <property type="protein sequence ID" value="ABS41561.1"/>
    <property type="molecule type" value="Genomic_DNA"/>
</dbReference>
<dbReference type="RefSeq" id="WP_012099674.1">
    <property type="nucleotide sequence ID" value="NC_009699.1"/>
</dbReference>
<dbReference type="SMR" id="A7GDQ5"/>
<dbReference type="KEGG" id="cbf:CLI_1652"/>
<dbReference type="HOGENOM" id="CLU_048577_1_2_9"/>
<dbReference type="UniPathway" id="UPA00031">
    <property type="reaction ID" value="UER00009"/>
</dbReference>
<dbReference type="Proteomes" id="UP000002410">
    <property type="component" value="Chromosome"/>
</dbReference>
<dbReference type="GO" id="GO:0005737">
    <property type="term" value="C:cytoplasm"/>
    <property type="evidence" value="ECO:0007669"/>
    <property type="project" value="UniProtKB-SubCell"/>
</dbReference>
<dbReference type="GO" id="GO:0003949">
    <property type="term" value="F:1-(5-phosphoribosyl)-5-[(5-phosphoribosylamino)methylideneamino]imidazole-4-carboxamide isomerase activity"/>
    <property type="evidence" value="ECO:0007669"/>
    <property type="project" value="UniProtKB-UniRule"/>
</dbReference>
<dbReference type="GO" id="GO:0000105">
    <property type="term" value="P:L-histidine biosynthetic process"/>
    <property type="evidence" value="ECO:0007669"/>
    <property type="project" value="UniProtKB-UniRule"/>
</dbReference>
<dbReference type="GO" id="GO:0000162">
    <property type="term" value="P:L-tryptophan biosynthetic process"/>
    <property type="evidence" value="ECO:0007669"/>
    <property type="project" value="TreeGrafter"/>
</dbReference>
<dbReference type="CDD" id="cd04732">
    <property type="entry name" value="HisA"/>
    <property type="match status" value="1"/>
</dbReference>
<dbReference type="FunFam" id="3.20.20.70:FF:000009">
    <property type="entry name" value="1-(5-phosphoribosyl)-5-[(5-phosphoribosylamino)methylideneamino] imidazole-4-carboxamide isomerase"/>
    <property type="match status" value="1"/>
</dbReference>
<dbReference type="Gene3D" id="3.20.20.70">
    <property type="entry name" value="Aldolase class I"/>
    <property type="match status" value="1"/>
</dbReference>
<dbReference type="HAMAP" id="MF_01014">
    <property type="entry name" value="HisA"/>
    <property type="match status" value="1"/>
</dbReference>
<dbReference type="InterPro" id="IPR013785">
    <property type="entry name" value="Aldolase_TIM"/>
</dbReference>
<dbReference type="InterPro" id="IPR006062">
    <property type="entry name" value="His_biosynth"/>
</dbReference>
<dbReference type="InterPro" id="IPR006063">
    <property type="entry name" value="HisA_bact_arch"/>
</dbReference>
<dbReference type="InterPro" id="IPR044524">
    <property type="entry name" value="Isoase_HisA-like"/>
</dbReference>
<dbReference type="InterPro" id="IPR023016">
    <property type="entry name" value="Isoase_HisA-like_bact"/>
</dbReference>
<dbReference type="InterPro" id="IPR011060">
    <property type="entry name" value="RibuloseP-bd_barrel"/>
</dbReference>
<dbReference type="NCBIfam" id="TIGR00007">
    <property type="entry name" value="1-(5-phosphoribosyl)-5-[(5-phosphoribosylamino)methylideneamino]imidazole-4-carboxamide isomerase"/>
    <property type="match status" value="1"/>
</dbReference>
<dbReference type="PANTHER" id="PTHR43090">
    <property type="entry name" value="1-(5-PHOSPHORIBOSYL)-5-[(5-PHOSPHORIBOSYLAMINO)METHYLIDENEAMINO] IMIDAZOLE-4-CARBOXAMIDE ISOMERASE"/>
    <property type="match status" value="1"/>
</dbReference>
<dbReference type="PANTHER" id="PTHR43090:SF2">
    <property type="entry name" value="1-(5-PHOSPHORIBOSYL)-5-[(5-PHOSPHORIBOSYLAMINO)METHYLIDENEAMINO] IMIDAZOLE-4-CARBOXAMIDE ISOMERASE"/>
    <property type="match status" value="1"/>
</dbReference>
<dbReference type="Pfam" id="PF00977">
    <property type="entry name" value="His_biosynth"/>
    <property type="match status" value="1"/>
</dbReference>
<dbReference type="SUPFAM" id="SSF51366">
    <property type="entry name" value="Ribulose-phoshate binding barrel"/>
    <property type="match status" value="1"/>
</dbReference>
<evidence type="ECO:0000255" key="1">
    <source>
        <dbReference type="HAMAP-Rule" id="MF_01014"/>
    </source>
</evidence>
<accession>A7GDQ5</accession>
<name>HIS4_CLOBL</name>
<comment type="catalytic activity">
    <reaction evidence="1">
        <text>1-(5-phospho-beta-D-ribosyl)-5-[(5-phospho-beta-D-ribosylamino)methylideneamino]imidazole-4-carboxamide = 5-[(5-phospho-1-deoxy-D-ribulos-1-ylimino)methylamino]-1-(5-phospho-beta-D-ribosyl)imidazole-4-carboxamide</text>
        <dbReference type="Rhea" id="RHEA:15469"/>
        <dbReference type="ChEBI" id="CHEBI:58435"/>
        <dbReference type="ChEBI" id="CHEBI:58525"/>
        <dbReference type="EC" id="5.3.1.16"/>
    </reaction>
</comment>
<comment type="pathway">
    <text evidence="1">Amino-acid biosynthesis; L-histidine biosynthesis; L-histidine from 5-phospho-alpha-D-ribose 1-diphosphate: step 4/9.</text>
</comment>
<comment type="subcellular location">
    <subcellularLocation>
        <location evidence="1">Cytoplasm</location>
    </subcellularLocation>
</comment>
<comment type="similarity">
    <text evidence="1">Belongs to the HisA/HisF family.</text>
</comment>